<accession>D4GKM1</accession>
<comment type="function">
    <text evidence="1">Digests double-stranded RNA. Involved in the processing of primary rRNA transcript to yield the immediate precursors to the large and small rRNAs (23S and 16S). Processes some mRNAs, and tRNAs when they are encoded in the rRNA operon. Processes pre-crRNA and tracrRNA of type II CRISPR loci if present in the organism (By similarity).</text>
</comment>
<comment type="catalytic activity">
    <reaction>
        <text>Endonucleolytic cleavage to 5'-phosphomonoester.</text>
        <dbReference type="EC" id="3.1.26.3"/>
    </reaction>
</comment>
<comment type="cofactor">
    <cofactor evidence="1">
        <name>Mg(2+)</name>
        <dbReference type="ChEBI" id="CHEBI:18420"/>
    </cofactor>
</comment>
<comment type="subunit">
    <text evidence="1">Homodimer.</text>
</comment>
<comment type="subcellular location">
    <subcellularLocation>
        <location evidence="1">Cytoplasm</location>
    </subcellularLocation>
</comment>
<comment type="similarity">
    <text evidence="3">Belongs to the ribonuclease III family.</text>
</comment>
<comment type="sequence caution" evidence="3">
    <conflict type="erroneous initiation">
        <sequence resource="EMBL-CDS" id="ADD78060"/>
    </conflict>
    <text>Truncated N-terminus.</text>
</comment>
<reference key="1">
    <citation type="journal article" date="2010" name="J. Bacteriol.">
        <title>Genome sequence of Pantoea ananatis LMG20103, the causative agent of Eucalyptus blight and dieback.</title>
        <authorList>
            <person name="De Maayer P."/>
            <person name="Chan W.Y."/>
            <person name="Venter S.N."/>
            <person name="Toth I.K."/>
            <person name="Birch P.R."/>
            <person name="Joubert F."/>
            <person name="Coutinho T.A."/>
        </authorList>
    </citation>
    <scope>NUCLEOTIDE SEQUENCE [LARGE SCALE GENOMIC DNA]</scope>
    <source>
        <strain>LMG 20103</strain>
    </source>
</reference>
<gene>
    <name type="primary">rnc</name>
    <name type="ordered locus">PANA_2893</name>
</gene>
<evidence type="ECO:0000250" key="1"/>
<evidence type="ECO:0000255" key="2"/>
<evidence type="ECO:0000305" key="3"/>
<proteinExistence type="inferred from homology"/>
<keyword id="KW-0963">Cytoplasm</keyword>
<keyword id="KW-0255">Endonuclease</keyword>
<keyword id="KW-0378">Hydrolase</keyword>
<keyword id="KW-0460">Magnesium</keyword>
<keyword id="KW-0479">Metal-binding</keyword>
<keyword id="KW-0507">mRNA processing</keyword>
<keyword id="KW-0540">Nuclease</keyword>
<keyword id="KW-1185">Reference proteome</keyword>
<keyword id="KW-0694">RNA-binding</keyword>
<keyword id="KW-0698">rRNA processing</keyword>
<keyword id="KW-0699">rRNA-binding</keyword>
<keyword id="KW-0819">tRNA processing</keyword>
<sequence length="226" mass="25386">MNPILINKLQRKLGYTFTHSELLQQALTHRSASSKHNERLEFLGDSILSYVIANALYHRFPRVDEGDMSRMRATLVRGNTLAEMAREFDLGECLRLGPGELKSGGFRRESILADTVEALIGGVFLDSDIQTVEKLILDWYQTRLDEISPGDKQKDPKTRLQEYLQGRHLPLPSYLVVQVRGEAHDQEFTIHCQVSGMAEPVVGVGSSRRKAEQAAAEQALIKLGLE</sequence>
<name>RNC_PANAM</name>
<feature type="chain" id="PRO_0000416611" description="Ribonuclease 3">
    <location>
        <begin position="1"/>
        <end position="226"/>
    </location>
</feature>
<feature type="domain" description="RNase III">
    <location>
        <begin position="6"/>
        <end position="128"/>
    </location>
</feature>
<feature type="domain" description="DRBM">
    <location>
        <begin position="155"/>
        <end position="225"/>
    </location>
</feature>
<feature type="active site" evidence="2">
    <location>
        <position position="45"/>
    </location>
</feature>
<feature type="active site" evidence="1">
    <location>
        <position position="117"/>
    </location>
</feature>
<feature type="binding site" evidence="1">
    <location>
        <position position="41"/>
    </location>
    <ligand>
        <name>Mg(2+)</name>
        <dbReference type="ChEBI" id="CHEBI:18420"/>
    </ligand>
</feature>
<feature type="binding site" evidence="1">
    <location>
        <position position="114"/>
    </location>
    <ligand>
        <name>Mg(2+)</name>
        <dbReference type="ChEBI" id="CHEBI:18420"/>
    </ligand>
</feature>
<feature type="binding site" evidence="1">
    <location>
        <position position="117"/>
    </location>
    <ligand>
        <name>Mg(2+)</name>
        <dbReference type="ChEBI" id="CHEBI:18420"/>
    </ligand>
</feature>
<organism>
    <name type="scientific">Pantoea ananatis (strain LMG 20103)</name>
    <dbReference type="NCBI Taxonomy" id="706191"/>
    <lineage>
        <taxon>Bacteria</taxon>
        <taxon>Pseudomonadati</taxon>
        <taxon>Pseudomonadota</taxon>
        <taxon>Gammaproteobacteria</taxon>
        <taxon>Enterobacterales</taxon>
        <taxon>Erwiniaceae</taxon>
        <taxon>Pantoea</taxon>
    </lineage>
</organism>
<dbReference type="EC" id="3.1.26.3"/>
<dbReference type="EMBL" id="CP001875">
    <property type="protein sequence ID" value="ADD78060.1"/>
    <property type="status" value="ALT_INIT"/>
    <property type="molecule type" value="Genomic_DNA"/>
</dbReference>
<dbReference type="RefSeq" id="WP_014594336.1">
    <property type="nucleotide sequence ID" value="NC_013956.2"/>
</dbReference>
<dbReference type="SMR" id="D4GKM1"/>
<dbReference type="STRING" id="706191.PANA_2893"/>
<dbReference type="GeneID" id="65791797"/>
<dbReference type="KEGG" id="pam:PANA_2893"/>
<dbReference type="eggNOG" id="COG0571">
    <property type="taxonomic scope" value="Bacteria"/>
</dbReference>
<dbReference type="HOGENOM" id="CLU_000907_1_1_6"/>
<dbReference type="Proteomes" id="UP000001702">
    <property type="component" value="Chromosome"/>
</dbReference>
<dbReference type="GO" id="GO:0005737">
    <property type="term" value="C:cytoplasm"/>
    <property type="evidence" value="ECO:0007669"/>
    <property type="project" value="UniProtKB-SubCell"/>
</dbReference>
<dbReference type="GO" id="GO:0003725">
    <property type="term" value="F:double-stranded RNA binding"/>
    <property type="evidence" value="ECO:0007669"/>
    <property type="project" value="TreeGrafter"/>
</dbReference>
<dbReference type="GO" id="GO:0046872">
    <property type="term" value="F:metal ion binding"/>
    <property type="evidence" value="ECO:0007669"/>
    <property type="project" value="UniProtKB-KW"/>
</dbReference>
<dbReference type="GO" id="GO:0004525">
    <property type="term" value="F:ribonuclease III activity"/>
    <property type="evidence" value="ECO:0007669"/>
    <property type="project" value="UniProtKB-UniRule"/>
</dbReference>
<dbReference type="GO" id="GO:0019843">
    <property type="term" value="F:rRNA binding"/>
    <property type="evidence" value="ECO:0007669"/>
    <property type="project" value="UniProtKB-KW"/>
</dbReference>
<dbReference type="GO" id="GO:0006397">
    <property type="term" value="P:mRNA processing"/>
    <property type="evidence" value="ECO:0007669"/>
    <property type="project" value="UniProtKB-UniRule"/>
</dbReference>
<dbReference type="GO" id="GO:0010468">
    <property type="term" value="P:regulation of gene expression"/>
    <property type="evidence" value="ECO:0007669"/>
    <property type="project" value="TreeGrafter"/>
</dbReference>
<dbReference type="GO" id="GO:0006364">
    <property type="term" value="P:rRNA processing"/>
    <property type="evidence" value="ECO:0007669"/>
    <property type="project" value="UniProtKB-UniRule"/>
</dbReference>
<dbReference type="GO" id="GO:0008033">
    <property type="term" value="P:tRNA processing"/>
    <property type="evidence" value="ECO:0007669"/>
    <property type="project" value="UniProtKB-KW"/>
</dbReference>
<dbReference type="CDD" id="cd10845">
    <property type="entry name" value="DSRM_RNAse_III_family"/>
    <property type="match status" value="1"/>
</dbReference>
<dbReference type="CDD" id="cd00593">
    <property type="entry name" value="RIBOc"/>
    <property type="match status" value="1"/>
</dbReference>
<dbReference type="FunFam" id="1.10.1520.10:FF:000001">
    <property type="entry name" value="Ribonuclease 3"/>
    <property type="match status" value="1"/>
</dbReference>
<dbReference type="FunFam" id="3.30.160.20:FF:000003">
    <property type="entry name" value="Ribonuclease 3"/>
    <property type="match status" value="1"/>
</dbReference>
<dbReference type="Gene3D" id="3.30.160.20">
    <property type="match status" value="1"/>
</dbReference>
<dbReference type="Gene3D" id="1.10.1520.10">
    <property type="entry name" value="Ribonuclease III domain"/>
    <property type="match status" value="1"/>
</dbReference>
<dbReference type="HAMAP" id="MF_00104">
    <property type="entry name" value="RNase_III"/>
    <property type="match status" value="1"/>
</dbReference>
<dbReference type="InterPro" id="IPR014720">
    <property type="entry name" value="dsRBD_dom"/>
</dbReference>
<dbReference type="InterPro" id="IPR011907">
    <property type="entry name" value="RNase_III"/>
</dbReference>
<dbReference type="InterPro" id="IPR000999">
    <property type="entry name" value="RNase_III_dom"/>
</dbReference>
<dbReference type="InterPro" id="IPR036389">
    <property type="entry name" value="RNase_III_sf"/>
</dbReference>
<dbReference type="NCBIfam" id="TIGR02191">
    <property type="entry name" value="RNaseIII"/>
    <property type="match status" value="1"/>
</dbReference>
<dbReference type="PANTHER" id="PTHR11207:SF0">
    <property type="entry name" value="RIBONUCLEASE 3"/>
    <property type="match status" value="1"/>
</dbReference>
<dbReference type="PANTHER" id="PTHR11207">
    <property type="entry name" value="RIBONUCLEASE III"/>
    <property type="match status" value="1"/>
</dbReference>
<dbReference type="Pfam" id="PF00035">
    <property type="entry name" value="dsrm"/>
    <property type="match status" value="1"/>
</dbReference>
<dbReference type="Pfam" id="PF14622">
    <property type="entry name" value="Ribonucleas_3_3"/>
    <property type="match status" value="1"/>
</dbReference>
<dbReference type="SMART" id="SM00358">
    <property type="entry name" value="DSRM"/>
    <property type="match status" value="1"/>
</dbReference>
<dbReference type="SMART" id="SM00535">
    <property type="entry name" value="RIBOc"/>
    <property type="match status" value="1"/>
</dbReference>
<dbReference type="SUPFAM" id="SSF54768">
    <property type="entry name" value="dsRNA-binding domain-like"/>
    <property type="match status" value="1"/>
</dbReference>
<dbReference type="SUPFAM" id="SSF69065">
    <property type="entry name" value="RNase III domain-like"/>
    <property type="match status" value="1"/>
</dbReference>
<dbReference type="PROSITE" id="PS50137">
    <property type="entry name" value="DS_RBD"/>
    <property type="match status" value="1"/>
</dbReference>
<dbReference type="PROSITE" id="PS00517">
    <property type="entry name" value="RNASE_3_1"/>
    <property type="match status" value="1"/>
</dbReference>
<dbReference type="PROSITE" id="PS50142">
    <property type="entry name" value="RNASE_3_2"/>
    <property type="match status" value="1"/>
</dbReference>
<protein>
    <recommendedName>
        <fullName>Ribonuclease 3</fullName>
        <ecNumber>3.1.26.3</ecNumber>
    </recommendedName>
    <alternativeName>
        <fullName>Ribonuclease III</fullName>
        <shortName>RNase III</shortName>
    </alternativeName>
</protein>